<proteinExistence type="inferred from homology"/>
<evidence type="ECO:0000255" key="1">
    <source>
        <dbReference type="HAMAP-Rule" id="MF_01351"/>
    </source>
</evidence>
<protein>
    <recommendedName>
        <fullName evidence="1">NADH-quinone oxidoreductase subunit I</fullName>
        <ecNumber evidence="1">7.1.1.-</ecNumber>
    </recommendedName>
    <alternativeName>
        <fullName evidence="1">NADH dehydrogenase I subunit I</fullName>
    </alternativeName>
    <alternativeName>
        <fullName evidence="1">NDH-1 subunit I</fullName>
    </alternativeName>
</protein>
<keyword id="KW-0004">4Fe-4S</keyword>
<keyword id="KW-1003">Cell membrane</keyword>
<keyword id="KW-0408">Iron</keyword>
<keyword id="KW-0411">Iron-sulfur</keyword>
<keyword id="KW-0472">Membrane</keyword>
<keyword id="KW-0479">Metal-binding</keyword>
<keyword id="KW-0520">NAD</keyword>
<keyword id="KW-0874">Quinone</keyword>
<keyword id="KW-0677">Repeat</keyword>
<keyword id="KW-1278">Translocase</keyword>
<accession>A0PR46</accession>
<organism>
    <name type="scientific">Mycobacterium ulcerans (strain Agy99)</name>
    <dbReference type="NCBI Taxonomy" id="362242"/>
    <lineage>
        <taxon>Bacteria</taxon>
        <taxon>Bacillati</taxon>
        <taxon>Actinomycetota</taxon>
        <taxon>Actinomycetes</taxon>
        <taxon>Mycobacteriales</taxon>
        <taxon>Mycobacteriaceae</taxon>
        <taxon>Mycobacterium</taxon>
        <taxon>Mycobacterium ulcerans group</taxon>
    </lineage>
</organism>
<reference key="1">
    <citation type="journal article" date="2007" name="Genome Res.">
        <title>Reductive evolution and niche adaptation inferred from the genome of Mycobacterium ulcerans, the causative agent of Buruli ulcer.</title>
        <authorList>
            <person name="Stinear T.P."/>
            <person name="Seemann T."/>
            <person name="Pidot S."/>
            <person name="Frigui W."/>
            <person name="Reysset G."/>
            <person name="Garnier T."/>
            <person name="Meurice G."/>
            <person name="Simon D."/>
            <person name="Bouchier C."/>
            <person name="Ma L."/>
            <person name="Tichit M."/>
            <person name="Porter J.L."/>
            <person name="Ryan J."/>
            <person name="Johnson P.D.R."/>
            <person name="Davies J.K."/>
            <person name="Jenkin G.A."/>
            <person name="Small P.L.C."/>
            <person name="Jones L.M."/>
            <person name="Tekaia F."/>
            <person name="Laval F."/>
            <person name="Daffe M."/>
            <person name="Parkhill J."/>
            <person name="Cole S.T."/>
        </authorList>
    </citation>
    <scope>NUCLEOTIDE SEQUENCE [LARGE SCALE GENOMIC DNA]</scope>
    <source>
        <strain>Agy99</strain>
    </source>
</reference>
<sequence>MAKFLDSIAGFGVTFGSMFKKTVTEEYPEKPGPVAPRYHGRHQLNRYPDGLEKCIGCELCAWACPADAIYVEGADNTDEQRFSPGERYGRVYQINYLRCIGCGLCIEACPTRALTMTNDYELADDNRADLIYEKDRLLAPLQPEMTAPPHPRAAGATDKDYYLGNVTAEGLRETQKTGESR</sequence>
<comment type="function">
    <text evidence="1">NDH-1 shuttles electrons from NADH, via FMN and iron-sulfur (Fe-S) centers, to quinones in the respiratory chain. The immediate electron acceptor for the enzyme in this species is believed to be menaquinone. Couples the redox reaction to proton translocation (for every two electrons transferred, four hydrogen ions are translocated across the cytoplasmic membrane), and thus conserves the redox energy in a proton gradient.</text>
</comment>
<comment type="catalytic activity">
    <reaction evidence="1">
        <text>a quinone + NADH + 5 H(+)(in) = a quinol + NAD(+) + 4 H(+)(out)</text>
        <dbReference type="Rhea" id="RHEA:57888"/>
        <dbReference type="ChEBI" id="CHEBI:15378"/>
        <dbReference type="ChEBI" id="CHEBI:24646"/>
        <dbReference type="ChEBI" id="CHEBI:57540"/>
        <dbReference type="ChEBI" id="CHEBI:57945"/>
        <dbReference type="ChEBI" id="CHEBI:132124"/>
    </reaction>
</comment>
<comment type="cofactor">
    <cofactor evidence="1">
        <name>[4Fe-4S] cluster</name>
        <dbReference type="ChEBI" id="CHEBI:49883"/>
    </cofactor>
    <text evidence="1">Binds 2 [4Fe-4S] clusters per subunit.</text>
</comment>
<comment type="subunit">
    <text evidence="1">NDH-1 is composed of 14 different subunits. Subunits NuoA, H, J, K, L, M, N constitute the membrane sector of the complex.</text>
</comment>
<comment type="subcellular location">
    <subcellularLocation>
        <location evidence="1">Cell membrane</location>
        <topology evidence="1">Peripheral membrane protein</topology>
    </subcellularLocation>
</comment>
<comment type="similarity">
    <text evidence="1">Belongs to the complex I 23 kDa subunit family.</text>
</comment>
<feature type="chain" id="PRO_0000298519" description="NADH-quinone oxidoreductase subunit I">
    <location>
        <begin position="1"/>
        <end position="181"/>
    </location>
</feature>
<feature type="domain" description="4Fe-4S ferredoxin-type 1" evidence="1">
    <location>
        <begin position="44"/>
        <end position="74"/>
    </location>
</feature>
<feature type="domain" description="4Fe-4S ferredoxin-type 2" evidence="1">
    <location>
        <begin position="90"/>
        <end position="119"/>
    </location>
</feature>
<feature type="binding site" evidence="1">
    <location>
        <position position="54"/>
    </location>
    <ligand>
        <name>[4Fe-4S] cluster</name>
        <dbReference type="ChEBI" id="CHEBI:49883"/>
        <label>1</label>
    </ligand>
</feature>
<feature type="binding site" evidence="1">
    <location>
        <position position="57"/>
    </location>
    <ligand>
        <name>[4Fe-4S] cluster</name>
        <dbReference type="ChEBI" id="CHEBI:49883"/>
        <label>1</label>
    </ligand>
</feature>
<feature type="binding site" evidence="1">
    <location>
        <position position="60"/>
    </location>
    <ligand>
        <name>[4Fe-4S] cluster</name>
        <dbReference type="ChEBI" id="CHEBI:49883"/>
        <label>1</label>
    </ligand>
</feature>
<feature type="binding site" evidence="1">
    <location>
        <position position="64"/>
    </location>
    <ligand>
        <name>[4Fe-4S] cluster</name>
        <dbReference type="ChEBI" id="CHEBI:49883"/>
        <label>2</label>
    </ligand>
</feature>
<feature type="binding site" evidence="1">
    <location>
        <position position="99"/>
    </location>
    <ligand>
        <name>[4Fe-4S] cluster</name>
        <dbReference type="ChEBI" id="CHEBI:49883"/>
        <label>2</label>
    </ligand>
</feature>
<feature type="binding site" evidence="1">
    <location>
        <position position="102"/>
    </location>
    <ligand>
        <name>[4Fe-4S] cluster</name>
        <dbReference type="ChEBI" id="CHEBI:49883"/>
        <label>2</label>
    </ligand>
</feature>
<feature type="binding site" evidence="1">
    <location>
        <position position="105"/>
    </location>
    <ligand>
        <name>[4Fe-4S] cluster</name>
        <dbReference type="ChEBI" id="CHEBI:49883"/>
        <label>2</label>
    </ligand>
</feature>
<feature type="binding site" evidence="1">
    <location>
        <position position="109"/>
    </location>
    <ligand>
        <name>[4Fe-4S] cluster</name>
        <dbReference type="ChEBI" id="CHEBI:49883"/>
        <label>1</label>
    </ligand>
</feature>
<name>NUOI_MYCUA</name>
<dbReference type="EC" id="7.1.1.-" evidence="1"/>
<dbReference type="EMBL" id="CP000325">
    <property type="protein sequence ID" value="ABL04815.1"/>
    <property type="molecule type" value="Genomic_DNA"/>
</dbReference>
<dbReference type="SMR" id="A0PR46"/>
<dbReference type="KEGG" id="mul:MUL_2467"/>
<dbReference type="eggNOG" id="COG1143">
    <property type="taxonomic scope" value="Bacteria"/>
</dbReference>
<dbReference type="HOGENOM" id="CLU_067218_4_0_11"/>
<dbReference type="Proteomes" id="UP000000765">
    <property type="component" value="Chromosome"/>
</dbReference>
<dbReference type="GO" id="GO:0005886">
    <property type="term" value="C:plasma membrane"/>
    <property type="evidence" value="ECO:0007669"/>
    <property type="project" value="UniProtKB-SubCell"/>
</dbReference>
<dbReference type="GO" id="GO:0051539">
    <property type="term" value="F:4 iron, 4 sulfur cluster binding"/>
    <property type="evidence" value="ECO:0007669"/>
    <property type="project" value="UniProtKB-KW"/>
</dbReference>
<dbReference type="GO" id="GO:0005506">
    <property type="term" value="F:iron ion binding"/>
    <property type="evidence" value="ECO:0007669"/>
    <property type="project" value="UniProtKB-UniRule"/>
</dbReference>
<dbReference type="GO" id="GO:0050136">
    <property type="term" value="F:NADH:ubiquinone reductase (non-electrogenic) activity"/>
    <property type="evidence" value="ECO:0007669"/>
    <property type="project" value="UniProtKB-UniRule"/>
</dbReference>
<dbReference type="GO" id="GO:0048038">
    <property type="term" value="F:quinone binding"/>
    <property type="evidence" value="ECO:0007669"/>
    <property type="project" value="UniProtKB-KW"/>
</dbReference>
<dbReference type="GO" id="GO:0009060">
    <property type="term" value="P:aerobic respiration"/>
    <property type="evidence" value="ECO:0007669"/>
    <property type="project" value="TreeGrafter"/>
</dbReference>
<dbReference type="FunFam" id="3.30.70.3270:FF:000007">
    <property type="entry name" value="NADH-quinone oxidoreductase subunit I"/>
    <property type="match status" value="1"/>
</dbReference>
<dbReference type="Gene3D" id="3.30.70.3270">
    <property type="match status" value="1"/>
</dbReference>
<dbReference type="HAMAP" id="MF_01351">
    <property type="entry name" value="NDH1_NuoI"/>
    <property type="match status" value="1"/>
</dbReference>
<dbReference type="InterPro" id="IPR017896">
    <property type="entry name" value="4Fe4S_Fe-S-bd"/>
</dbReference>
<dbReference type="InterPro" id="IPR017900">
    <property type="entry name" value="4Fe4S_Fe_S_CS"/>
</dbReference>
<dbReference type="InterPro" id="IPR010226">
    <property type="entry name" value="NADH_quinone_OxRdtase_chainI"/>
</dbReference>
<dbReference type="NCBIfam" id="TIGR01971">
    <property type="entry name" value="NuoI"/>
    <property type="match status" value="1"/>
</dbReference>
<dbReference type="NCBIfam" id="NF004537">
    <property type="entry name" value="PRK05888.1-3"/>
    <property type="match status" value="1"/>
</dbReference>
<dbReference type="PANTHER" id="PTHR10849:SF20">
    <property type="entry name" value="NADH DEHYDROGENASE [UBIQUINONE] IRON-SULFUR PROTEIN 8, MITOCHONDRIAL"/>
    <property type="match status" value="1"/>
</dbReference>
<dbReference type="PANTHER" id="PTHR10849">
    <property type="entry name" value="NADH DEHYDROGENASE UBIQUINONE IRON-SULFUR PROTEIN 8, MITOCHONDRIAL"/>
    <property type="match status" value="1"/>
</dbReference>
<dbReference type="Pfam" id="PF12838">
    <property type="entry name" value="Fer4_7"/>
    <property type="match status" value="1"/>
</dbReference>
<dbReference type="SUPFAM" id="SSF54862">
    <property type="entry name" value="4Fe-4S ferredoxins"/>
    <property type="match status" value="1"/>
</dbReference>
<dbReference type="PROSITE" id="PS00198">
    <property type="entry name" value="4FE4S_FER_1"/>
    <property type="match status" value="2"/>
</dbReference>
<dbReference type="PROSITE" id="PS51379">
    <property type="entry name" value="4FE4S_FER_2"/>
    <property type="match status" value="2"/>
</dbReference>
<gene>
    <name evidence="1" type="primary">nuoI</name>
    <name type="ordered locus">MUL_2467</name>
</gene>